<evidence type="ECO:0000255" key="1">
    <source>
        <dbReference type="HAMAP-Rule" id="MF_01218"/>
    </source>
</evidence>
<protein>
    <recommendedName>
        <fullName evidence="1">Uracil phosphoribosyltransferase</fullName>
        <ecNumber evidence="1">2.4.2.9</ecNumber>
    </recommendedName>
    <alternativeName>
        <fullName evidence="1">UMP pyrophosphorylase</fullName>
    </alternativeName>
    <alternativeName>
        <fullName evidence="1">UPRTase</fullName>
    </alternativeName>
</protein>
<feature type="chain" id="PRO_0000120917" description="Uracil phosphoribosyltransferase">
    <location>
        <begin position="1"/>
        <end position="214"/>
    </location>
</feature>
<feature type="binding site" evidence="1">
    <location>
        <position position="107"/>
    </location>
    <ligand>
        <name>5-phospho-alpha-D-ribose 1-diphosphate</name>
        <dbReference type="ChEBI" id="CHEBI:58017"/>
    </ligand>
</feature>
<feature type="binding site" evidence="1">
    <location>
        <begin position="135"/>
        <end position="143"/>
    </location>
    <ligand>
        <name>5-phospho-alpha-D-ribose 1-diphosphate</name>
        <dbReference type="ChEBI" id="CHEBI:58017"/>
    </ligand>
</feature>
<feature type="binding site" evidence="1">
    <location>
        <position position="198"/>
    </location>
    <ligand>
        <name>uracil</name>
        <dbReference type="ChEBI" id="CHEBI:17568"/>
    </ligand>
</feature>
<feature type="binding site" evidence="1">
    <location>
        <begin position="203"/>
        <end position="205"/>
    </location>
    <ligand>
        <name>uracil</name>
        <dbReference type="ChEBI" id="CHEBI:17568"/>
    </ligand>
</feature>
<feature type="binding site" evidence="1">
    <location>
        <position position="204"/>
    </location>
    <ligand>
        <name>5-phospho-alpha-D-ribose 1-diphosphate</name>
        <dbReference type="ChEBI" id="CHEBI:58017"/>
    </ligand>
</feature>
<name>UPP_AERPE</name>
<reference key="1">
    <citation type="journal article" date="1999" name="DNA Res.">
        <title>Complete genome sequence of an aerobic hyper-thermophilic crenarchaeon, Aeropyrum pernix K1.</title>
        <authorList>
            <person name="Kawarabayasi Y."/>
            <person name="Hino Y."/>
            <person name="Horikawa H."/>
            <person name="Yamazaki S."/>
            <person name="Haikawa Y."/>
            <person name="Jin-no K."/>
            <person name="Takahashi M."/>
            <person name="Sekine M."/>
            <person name="Baba S."/>
            <person name="Ankai A."/>
            <person name="Kosugi H."/>
            <person name="Hosoyama A."/>
            <person name="Fukui S."/>
            <person name="Nagai Y."/>
            <person name="Nishijima K."/>
            <person name="Nakazawa H."/>
            <person name="Takamiya M."/>
            <person name="Masuda S."/>
            <person name="Funahashi T."/>
            <person name="Tanaka T."/>
            <person name="Kudoh Y."/>
            <person name="Yamazaki J."/>
            <person name="Kushida N."/>
            <person name="Oguchi A."/>
            <person name="Aoki K."/>
            <person name="Kubota K."/>
            <person name="Nakamura Y."/>
            <person name="Nomura N."/>
            <person name="Sako Y."/>
            <person name="Kikuchi H."/>
        </authorList>
    </citation>
    <scope>NUCLEOTIDE SEQUENCE [LARGE SCALE GENOMIC DNA]</scope>
    <source>
        <strain>ATCC 700893 / DSM 11879 / JCM 9820 / NBRC 100138 / K1</strain>
    </source>
</reference>
<keyword id="KW-0021">Allosteric enzyme</keyword>
<keyword id="KW-0328">Glycosyltransferase</keyword>
<keyword id="KW-0342">GTP-binding</keyword>
<keyword id="KW-0460">Magnesium</keyword>
<keyword id="KW-0547">Nucleotide-binding</keyword>
<keyword id="KW-1185">Reference proteome</keyword>
<keyword id="KW-0808">Transferase</keyword>
<sequence>MVAAVRVIGGETPLARYVLKVLRDRTTGFPEFRRYVRIAGSILAVYIAGELGWVEEEVETPLGAKAKELAPAGPVYLVGILGASLPMVEGFASMMPEARIALVAARRVEEPGRLKIEVYYSRLPRMFDGPAVVLDPMLATGKTVAEAVRLARDRGASKVVIGSIIASRQGVEYISSLYGDTPIYTLALDPELDENYFIVPGLGDAGDRALGVEP</sequence>
<organism>
    <name type="scientific">Aeropyrum pernix (strain ATCC 700893 / DSM 11879 / JCM 9820 / NBRC 100138 / K1)</name>
    <dbReference type="NCBI Taxonomy" id="272557"/>
    <lineage>
        <taxon>Archaea</taxon>
        <taxon>Thermoproteota</taxon>
        <taxon>Thermoprotei</taxon>
        <taxon>Desulfurococcales</taxon>
        <taxon>Desulfurococcaceae</taxon>
        <taxon>Aeropyrum</taxon>
    </lineage>
</organism>
<gene>
    <name evidence="1" type="primary">upp</name>
    <name type="ordered locus">APE_0545.1</name>
</gene>
<proteinExistence type="inferred from homology"/>
<comment type="function">
    <text evidence="1">Catalyzes the conversion of uracil and 5-phospho-alpha-D-ribose 1-diphosphate (PRPP) to UMP and diphosphate.</text>
</comment>
<comment type="catalytic activity">
    <reaction evidence="1">
        <text>UMP + diphosphate = 5-phospho-alpha-D-ribose 1-diphosphate + uracil</text>
        <dbReference type="Rhea" id="RHEA:13017"/>
        <dbReference type="ChEBI" id="CHEBI:17568"/>
        <dbReference type="ChEBI" id="CHEBI:33019"/>
        <dbReference type="ChEBI" id="CHEBI:57865"/>
        <dbReference type="ChEBI" id="CHEBI:58017"/>
        <dbReference type="EC" id="2.4.2.9"/>
    </reaction>
</comment>
<comment type="cofactor">
    <cofactor evidence="1">
        <name>Mg(2+)</name>
        <dbReference type="ChEBI" id="CHEBI:18420"/>
    </cofactor>
    <text evidence="1">Binds 1 Mg(2+) ion per subunit. The magnesium is bound as Mg-PRPP.</text>
</comment>
<comment type="activity regulation">
    <text evidence="1">Allosterically activated by GTP.</text>
</comment>
<comment type="pathway">
    <text evidence="1">Pyrimidine metabolism; UMP biosynthesis via salvage pathway; UMP from uracil: step 1/1.</text>
</comment>
<comment type="similarity">
    <text evidence="1">Belongs to the UPRTase family.</text>
</comment>
<dbReference type="EC" id="2.4.2.9" evidence="1"/>
<dbReference type="EMBL" id="BA000002">
    <property type="protein sequence ID" value="BAA79513.2"/>
    <property type="molecule type" value="Genomic_DNA"/>
</dbReference>
<dbReference type="PIR" id="A72639">
    <property type="entry name" value="A72639"/>
</dbReference>
<dbReference type="SMR" id="Q9YEN3"/>
<dbReference type="STRING" id="272557.APE_0545.1"/>
<dbReference type="EnsemblBacteria" id="BAA79513">
    <property type="protein sequence ID" value="BAA79513"/>
    <property type="gene ID" value="APE_0545.1"/>
</dbReference>
<dbReference type="KEGG" id="ape:APE_0545.1"/>
<dbReference type="PATRIC" id="fig|272557.25.peg.410"/>
<dbReference type="eggNOG" id="arCOG04128">
    <property type="taxonomic scope" value="Archaea"/>
</dbReference>
<dbReference type="UniPathway" id="UPA00574">
    <property type="reaction ID" value="UER00636"/>
</dbReference>
<dbReference type="Proteomes" id="UP000002518">
    <property type="component" value="Chromosome"/>
</dbReference>
<dbReference type="GO" id="GO:0005525">
    <property type="term" value="F:GTP binding"/>
    <property type="evidence" value="ECO:0007669"/>
    <property type="project" value="UniProtKB-KW"/>
</dbReference>
<dbReference type="GO" id="GO:0000287">
    <property type="term" value="F:magnesium ion binding"/>
    <property type="evidence" value="ECO:0007669"/>
    <property type="project" value="UniProtKB-UniRule"/>
</dbReference>
<dbReference type="GO" id="GO:0004845">
    <property type="term" value="F:uracil phosphoribosyltransferase activity"/>
    <property type="evidence" value="ECO:0007669"/>
    <property type="project" value="UniProtKB-UniRule"/>
</dbReference>
<dbReference type="GO" id="GO:0044206">
    <property type="term" value="P:UMP salvage"/>
    <property type="evidence" value="ECO:0007669"/>
    <property type="project" value="UniProtKB-UniRule"/>
</dbReference>
<dbReference type="GO" id="GO:0006223">
    <property type="term" value="P:uracil salvage"/>
    <property type="evidence" value="ECO:0007669"/>
    <property type="project" value="InterPro"/>
</dbReference>
<dbReference type="CDD" id="cd06223">
    <property type="entry name" value="PRTases_typeI"/>
    <property type="match status" value="1"/>
</dbReference>
<dbReference type="Gene3D" id="3.40.50.2020">
    <property type="match status" value="1"/>
</dbReference>
<dbReference type="HAMAP" id="MF_01218_A">
    <property type="entry name" value="Upp_A"/>
    <property type="match status" value="1"/>
</dbReference>
<dbReference type="InterPro" id="IPR000836">
    <property type="entry name" value="PRibTrfase_dom"/>
</dbReference>
<dbReference type="InterPro" id="IPR029057">
    <property type="entry name" value="PRTase-like"/>
</dbReference>
<dbReference type="InterPro" id="IPR034331">
    <property type="entry name" value="Upp_A"/>
</dbReference>
<dbReference type="InterPro" id="IPR005765">
    <property type="entry name" value="Ura_phspho_trans"/>
</dbReference>
<dbReference type="NCBIfam" id="NF001097">
    <property type="entry name" value="PRK00129.1"/>
    <property type="match status" value="1"/>
</dbReference>
<dbReference type="NCBIfam" id="TIGR01091">
    <property type="entry name" value="upp"/>
    <property type="match status" value="1"/>
</dbReference>
<dbReference type="Pfam" id="PF14681">
    <property type="entry name" value="UPRTase"/>
    <property type="match status" value="1"/>
</dbReference>
<dbReference type="SUPFAM" id="SSF53271">
    <property type="entry name" value="PRTase-like"/>
    <property type="match status" value="1"/>
</dbReference>
<accession>Q9YEN3</accession>